<reference key="1">
    <citation type="journal article" date="1995" name="Microbiology">
        <title>Complete nucleotide sequence of a skin element excised by DNA rearrangement during sporulation in Bacillus subtilis.</title>
        <authorList>
            <person name="Takemaru K."/>
            <person name="Mizuno M."/>
            <person name="Sato T."/>
            <person name="Takeuchi M."/>
            <person name="Kobayashi Y."/>
        </authorList>
    </citation>
    <scope>NUCLEOTIDE SEQUENCE [GENOMIC DNA]</scope>
    <source>
        <strain>168 / JH642</strain>
    </source>
</reference>
<reference key="2">
    <citation type="journal article" date="1996" name="Microbiology">
        <title>Systematic sequencing of the 283 kb 210 degrees-232 degrees region of the Bacillus subtilis genome containing the skin element and many sporulation genes.</title>
        <authorList>
            <person name="Mizuno M."/>
            <person name="Masuda S."/>
            <person name="Takemaru K."/>
            <person name="Hosono S."/>
            <person name="Sato T."/>
            <person name="Takeuchi M."/>
            <person name="Kobayashi Y."/>
        </authorList>
    </citation>
    <scope>NUCLEOTIDE SEQUENCE [GENOMIC DNA]</scope>
    <source>
        <strain>168 / JH642</strain>
    </source>
</reference>
<reference key="3">
    <citation type="journal article" date="1997" name="Nature">
        <title>The complete genome sequence of the Gram-positive bacterium Bacillus subtilis.</title>
        <authorList>
            <person name="Kunst F."/>
            <person name="Ogasawara N."/>
            <person name="Moszer I."/>
            <person name="Albertini A.M."/>
            <person name="Alloni G."/>
            <person name="Azevedo V."/>
            <person name="Bertero M.G."/>
            <person name="Bessieres P."/>
            <person name="Bolotin A."/>
            <person name="Borchert S."/>
            <person name="Borriss R."/>
            <person name="Boursier L."/>
            <person name="Brans A."/>
            <person name="Braun M."/>
            <person name="Brignell S.C."/>
            <person name="Bron S."/>
            <person name="Brouillet S."/>
            <person name="Bruschi C.V."/>
            <person name="Caldwell B."/>
            <person name="Capuano V."/>
            <person name="Carter N.M."/>
            <person name="Choi S.-K."/>
            <person name="Codani J.-J."/>
            <person name="Connerton I.F."/>
            <person name="Cummings N.J."/>
            <person name="Daniel R.A."/>
            <person name="Denizot F."/>
            <person name="Devine K.M."/>
            <person name="Duesterhoeft A."/>
            <person name="Ehrlich S.D."/>
            <person name="Emmerson P.T."/>
            <person name="Entian K.-D."/>
            <person name="Errington J."/>
            <person name="Fabret C."/>
            <person name="Ferrari E."/>
            <person name="Foulger D."/>
            <person name="Fritz C."/>
            <person name="Fujita M."/>
            <person name="Fujita Y."/>
            <person name="Fuma S."/>
            <person name="Galizzi A."/>
            <person name="Galleron N."/>
            <person name="Ghim S.-Y."/>
            <person name="Glaser P."/>
            <person name="Goffeau A."/>
            <person name="Golightly E.J."/>
            <person name="Grandi G."/>
            <person name="Guiseppi G."/>
            <person name="Guy B.J."/>
            <person name="Haga K."/>
            <person name="Haiech J."/>
            <person name="Harwood C.R."/>
            <person name="Henaut A."/>
            <person name="Hilbert H."/>
            <person name="Holsappel S."/>
            <person name="Hosono S."/>
            <person name="Hullo M.-F."/>
            <person name="Itaya M."/>
            <person name="Jones L.-M."/>
            <person name="Joris B."/>
            <person name="Karamata D."/>
            <person name="Kasahara Y."/>
            <person name="Klaerr-Blanchard M."/>
            <person name="Klein C."/>
            <person name="Kobayashi Y."/>
            <person name="Koetter P."/>
            <person name="Koningstein G."/>
            <person name="Krogh S."/>
            <person name="Kumano M."/>
            <person name="Kurita K."/>
            <person name="Lapidus A."/>
            <person name="Lardinois S."/>
            <person name="Lauber J."/>
            <person name="Lazarevic V."/>
            <person name="Lee S.-M."/>
            <person name="Levine A."/>
            <person name="Liu H."/>
            <person name="Masuda S."/>
            <person name="Mauel C."/>
            <person name="Medigue C."/>
            <person name="Medina N."/>
            <person name="Mellado R.P."/>
            <person name="Mizuno M."/>
            <person name="Moestl D."/>
            <person name="Nakai S."/>
            <person name="Noback M."/>
            <person name="Noone D."/>
            <person name="O'Reilly M."/>
            <person name="Ogawa K."/>
            <person name="Ogiwara A."/>
            <person name="Oudega B."/>
            <person name="Park S.-H."/>
            <person name="Parro V."/>
            <person name="Pohl T.M."/>
            <person name="Portetelle D."/>
            <person name="Porwollik S."/>
            <person name="Prescott A.M."/>
            <person name="Presecan E."/>
            <person name="Pujic P."/>
            <person name="Purnelle B."/>
            <person name="Rapoport G."/>
            <person name="Rey M."/>
            <person name="Reynolds S."/>
            <person name="Rieger M."/>
            <person name="Rivolta C."/>
            <person name="Rocha E."/>
            <person name="Roche B."/>
            <person name="Rose M."/>
            <person name="Sadaie Y."/>
            <person name="Sato T."/>
            <person name="Scanlan E."/>
            <person name="Schleich S."/>
            <person name="Schroeter R."/>
            <person name="Scoffone F."/>
            <person name="Sekiguchi J."/>
            <person name="Sekowska A."/>
            <person name="Seror S.J."/>
            <person name="Serror P."/>
            <person name="Shin B.-S."/>
            <person name="Soldo B."/>
            <person name="Sorokin A."/>
            <person name="Tacconi E."/>
            <person name="Takagi T."/>
            <person name="Takahashi H."/>
            <person name="Takemaru K."/>
            <person name="Takeuchi M."/>
            <person name="Tamakoshi A."/>
            <person name="Tanaka T."/>
            <person name="Terpstra P."/>
            <person name="Tognoni A."/>
            <person name="Tosato V."/>
            <person name="Uchiyama S."/>
            <person name="Vandenbol M."/>
            <person name="Vannier F."/>
            <person name="Vassarotti A."/>
            <person name="Viari A."/>
            <person name="Wambutt R."/>
            <person name="Wedler E."/>
            <person name="Wedler H."/>
            <person name="Weitzenegger T."/>
            <person name="Winters P."/>
            <person name="Wipat A."/>
            <person name="Yamamoto H."/>
            <person name="Yamane K."/>
            <person name="Yasumoto K."/>
            <person name="Yata K."/>
            <person name="Yoshida K."/>
            <person name="Yoshikawa H.-F."/>
            <person name="Zumstein E."/>
            <person name="Yoshikawa H."/>
            <person name="Danchin A."/>
        </authorList>
    </citation>
    <scope>NUCLEOTIDE SEQUENCE [LARGE SCALE GENOMIC DNA]</scope>
    <source>
        <strain>168</strain>
    </source>
</reference>
<reference key="4">
    <citation type="journal article" date="2009" name="Microbiology">
        <title>From a consortium sequence to a unified sequence: the Bacillus subtilis 168 reference genome a decade later.</title>
        <authorList>
            <person name="Barbe V."/>
            <person name="Cruveiller S."/>
            <person name="Kunst F."/>
            <person name="Lenoble P."/>
            <person name="Meurice G."/>
            <person name="Sekowska A."/>
            <person name="Vallenet D."/>
            <person name="Wang T."/>
            <person name="Moszer I."/>
            <person name="Medigue C."/>
            <person name="Danchin A."/>
        </authorList>
    </citation>
    <scope>SEQUENCE REVISION TO 188 AND 884</scope>
</reference>
<reference key="5">
    <citation type="journal article" date="1995" name="Gene">
        <title>Analysis of a Bacillus subtilis genome fragment using a co-operative computer system prototype.</title>
        <authorList>
            <person name="Medigue C."/>
            <person name="Moszer I."/>
            <person name="Viari A."/>
            <person name="Danchin A."/>
        </authorList>
    </citation>
    <scope>IDENTIFICATION</scope>
</reference>
<reference key="6">
    <citation type="journal article" date="2007" name="Mol. Cell. Proteomics">
        <title>The serine/threonine/tyrosine phosphoproteome of the model bacterium Bacillus subtilis.</title>
        <authorList>
            <person name="Macek B."/>
            <person name="Mijakovic I."/>
            <person name="Olsen J.V."/>
            <person name="Gnad F."/>
            <person name="Kumar C."/>
            <person name="Jensen P.R."/>
            <person name="Mann M."/>
        </authorList>
    </citation>
    <scope>PHOSPHORYLATION [LARGE SCALE ANALYSIS] AT SER-970 AND SER-972</scope>
    <scope>IDENTIFICATION BY MASS SPECTROMETRY</scope>
    <source>
        <strain>168</strain>
    </source>
</reference>
<feature type="chain" id="PRO_0000049766" description="Uncharacterized protein YqbO">
    <location>
        <begin position="1"/>
        <end position="1585"/>
    </location>
</feature>
<feature type="region of interest" description="Disordered" evidence="2">
    <location>
        <begin position="586"/>
        <end position="627"/>
    </location>
</feature>
<feature type="region of interest" description="Disordered" evidence="2">
    <location>
        <begin position="645"/>
        <end position="692"/>
    </location>
</feature>
<feature type="coiled-coil region" evidence="1">
    <location>
        <begin position="12"/>
        <end position="59"/>
    </location>
</feature>
<feature type="compositionally biased region" description="Polar residues" evidence="2">
    <location>
        <begin position="618"/>
        <end position="627"/>
    </location>
</feature>
<feature type="compositionally biased region" description="Basic residues" evidence="2">
    <location>
        <begin position="645"/>
        <end position="655"/>
    </location>
</feature>
<feature type="compositionally biased region" description="Polar residues" evidence="2">
    <location>
        <begin position="661"/>
        <end position="672"/>
    </location>
</feature>
<feature type="modified residue" description="Phosphoserine" evidence="3">
    <location>
        <position position="970"/>
    </location>
</feature>
<feature type="modified residue" description="Phosphoserine" evidence="3">
    <location>
        <position position="972"/>
    </location>
</feature>
<feature type="sequence conflict" description="In Ref. 1; BAA06947 and 2; BAA12411." evidence="4" ref="1 2">
    <original>S</original>
    <variation>P</variation>
    <location>
        <position position="188"/>
    </location>
</feature>
<feature type="sequence conflict" description="In Ref. 1; BAA06947 and 2; BAA12411." evidence="4" ref="1 2">
    <original>S</original>
    <variation>P</variation>
    <location>
        <position position="884"/>
    </location>
</feature>
<evidence type="ECO:0000255" key="1"/>
<evidence type="ECO:0000256" key="2">
    <source>
        <dbReference type="SAM" id="MobiDB-lite"/>
    </source>
</evidence>
<evidence type="ECO:0000269" key="3">
    <source>
    </source>
</evidence>
<evidence type="ECO:0000305" key="4"/>
<accession>P45931</accession>
<sequence>MAKLTATFELHDKISRKLRMIQGNAERLKRAANGPLIFEAEDRTERVMRQIDRSANRLTARARLLEMGLDDRVSNGLHSIRQQAEDLTEGSHEVTVSVNDQATPRFRLIRGGLTDLNSSHAEPTVSVRDHASNQLDEIRRHVTDVDSEHAEPTVSIKDRASAALDAIEAKIDSLKGATITLAVAGGFSAGSIMGSGKSTMSQDAYVSATSNVNKKDVAKMTDQIYFNNKAGSSREEVSLSLRNLSQQTGASKKALAELTESSSKIAQLMNADQAEVDRAFSSMYNNLKLSGKQSGDLIAYVYRNAGDQADDLLDTMNEYSSTFKDLKLTGGQIANAMIKGTKGGARNFDNLADSMREFNIRRTEMSDSQVDAFKTLFGAKETKKMFKGFKDGSISGEESLFRVAKALSKVKDKTKRAAIATELIGTQYEDLKQPILDMAEGIGTSAKTSGELERSFTKLRDNNPMTPVNDAMRDFESISKDMGTSLLTGLGPAFDKISSFINSKEGQEKLKEIKKDIADLGEEIGDKLNVAIEWSVNHWDDLKTAIKVVIPSLIGLIGYLKILRPLLKGIGTVGSDAAGVIRKLIPKRTPKAGTNTQSERRNRNSNRNASTRGRESKTATGPTSLPRSGSLTYCCCSDGGKNDRIRRRRGKRVLGRRGNPNRMNPSDSSIAVSSERLERRRSGRTVGTNPTRDSRSAIITTRSELYSAGRAAGGTSKFGKVLSPLKSVGKFAKGVPLLGTALAATDLIGMNKDNVGEKIGSAGGGLAGAATGAAIGSVIPGVGTAIGGLVGGIAGTMGGSSLGKAFDGSEVKKKLNSTLFDQKWWSEKWSGIKSNAKTSINGLSDTWSNVKEKVKSTLFNSEWWSEKWSGVKSWAQNKWNSASSVWESVKGKIKSTLFSEKWWSGKWEGVKSWAQSKWDSASSVWQSVKGKLKSTLFSEKWWSGKWESVKSWSKNKWDNAKSIWKSVKSSISETLFSKKWWSEKWQSVKELGSSILGGVKEVGGKVASSAKKTAGKAWGYVKSGVNYLFGSGKEKPKKHATGGYITKPTISWIGEAGKEFVIPVENNKGRGKMLLSQAASKLGMSVVDDIASASSAGGEPATSPLVRSAAVTASVSPIIDTSSLDEQATSFGQQFTKSFDQGIRDNVVSMEAWKQKNVGQPMNNLISYSPNYGKQVVNGYAKGQNSTSTGTDGFLQTKVKMPFQNTVNKSSSWGSGTIKGFASGQNSSQTGTDQYVSTHINKPFIRSKESSNGWGSGMIGNFVSGMTSKASEVNEAAKELAKKVEKAFREELDIHSPSRVMMSLGRFASIGIVKGLDSVDVKKFAEKQAGSLAAAYSGMGAVSGNVKQWLMAAIMATKTPMSWLPGLMTIAQHESGGNPKAINLWDSNAKAGHPSQGLMQTIPSTFNAHKLPGMNNILNPIHNAAAAIGYIKSRYGSINNVPGIRSMRHGGPYVGYANGGLITKEQIARVGEGNKREWIIPEERGIRGRYLLAQAAKALGMEVTDPSEKGQTELSSGQVTAATTGRNQTTFKAAGGKEVIIQFNGDQHFHNDQDMNSLVAKIKQALVDELEQDINIGTKGVVAFD</sequence>
<comment type="similarity">
    <text evidence="4">To B.subtilis XkdO.</text>
</comment>
<gene>
    <name type="primary">yqbO</name>
    <name type="ordered locus">BSU26030</name>
</gene>
<name>YQBO_BACSU</name>
<keyword id="KW-0175">Coiled coil</keyword>
<keyword id="KW-0597">Phosphoprotein</keyword>
<keyword id="KW-1185">Reference proteome</keyword>
<proteinExistence type="evidence at protein level"/>
<protein>
    <recommendedName>
        <fullName>Uncharacterized protein YqbO</fullName>
    </recommendedName>
</protein>
<dbReference type="EMBL" id="D32216">
    <property type="protein sequence ID" value="BAA06947.1"/>
    <property type="molecule type" value="Genomic_DNA"/>
</dbReference>
<dbReference type="EMBL" id="D84432">
    <property type="protein sequence ID" value="BAA12411.1"/>
    <property type="molecule type" value="Genomic_DNA"/>
</dbReference>
<dbReference type="EMBL" id="AL009126">
    <property type="protein sequence ID" value="CAB14544.2"/>
    <property type="molecule type" value="Genomic_DNA"/>
</dbReference>
<dbReference type="PIR" id="B69948">
    <property type="entry name" value="B69948"/>
</dbReference>
<dbReference type="RefSeq" id="NP_390480.2">
    <property type="nucleotide sequence ID" value="NC_000964.3"/>
</dbReference>
<dbReference type="RefSeq" id="WP_003246092.1">
    <property type="nucleotide sequence ID" value="NZ_OZ025638.1"/>
</dbReference>
<dbReference type="SMR" id="P45931"/>
<dbReference type="FunCoup" id="P45931">
    <property type="interactions" value="108"/>
</dbReference>
<dbReference type="IntAct" id="P45931">
    <property type="interactions" value="15"/>
</dbReference>
<dbReference type="STRING" id="224308.BSU26030"/>
<dbReference type="iPTMnet" id="P45931"/>
<dbReference type="PaxDb" id="224308-BSU26030"/>
<dbReference type="EnsemblBacteria" id="CAB14544">
    <property type="protein sequence ID" value="CAB14544"/>
    <property type="gene ID" value="BSU_26030"/>
</dbReference>
<dbReference type="GeneID" id="937747"/>
<dbReference type="KEGG" id="bsu:BSU26030"/>
<dbReference type="PATRIC" id="fig|224308.179.peg.2828"/>
<dbReference type="eggNOG" id="COG3953">
    <property type="taxonomic scope" value="Bacteria"/>
</dbReference>
<dbReference type="eggNOG" id="COG5280">
    <property type="taxonomic scope" value="Bacteria"/>
</dbReference>
<dbReference type="InParanoid" id="P45931"/>
<dbReference type="OrthoDB" id="28713at2"/>
<dbReference type="BioCyc" id="BSUB:BSU26030-MONOMER"/>
<dbReference type="Proteomes" id="UP000001570">
    <property type="component" value="Chromosome"/>
</dbReference>
<dbReference type="CDD" id="cd13402">
    <property type="entry name" value="LT_TF-like"/>
    <property type="match status" value="1"/>
</dbReference>
<dbReference type="Gene3D" id="1.10.530.10">
    <property type="match status" value="1"/>
</dbReference>
<dbReference type="InterPro" id="IPR023346">
    <property type="entry name" value="Lysozyme-like_dom_sf"/>
</dbReference>
<dbReference type="InterPro" id="IPR010090">
    <property type="entry name" value="Phage_tape_meas"/>
</dbReference>
<dbReference type="InterPro" id="IPR008258">
    <property type="entry name" value="Transglycosylase_SLT_dom_1"/>
</dbReference>
<dbReference type="PANTHER" id="PTHR21525:SF9">
    <property type="entry name" value="CHANNEL_COLICIN DOMAIN-CONTAINING PROTEIN"/>
    <property type="match status" value="1"/>
</dbReference>
<dbReference type="PANTHER" id="PTHR21525">
    <property type="entry name" value="MOTILE SPERM PROTEIN"/>
    <property type="match status" value="1"/>
</dbReference>
<dbReference type="Pfam" id="PF10145">
    <property type="entry name" value="PhageMin_Tail"/>
    <property type="match status" value="1"/>
</dbReference>
<dbReference type="Pfam" id="PF01464">
    <property type="entry name" value="SLT"/>
    <property type="match status" value="1"/>
</dbReference>
<dbReference type="SUPFAM" id="SSF53955">
    <property type="entry name" value="Lysozyme-like"/>
    <property type="match status" value="1"/>
</dbReference>
<organism>
    <name type="scientific">Bacillus subtilis (strain 168)</name>
    <dbReference type="NCBI Taxonomy" id="224308"/>
    <lineage>
        <taxon>Bacteria</taxon>
        <taxon>Bacillati</taxon>
        <taxon>Bacillota</taxon>
        <taxon>Bacilli</taxon>
        <taxon>Bacillales</taxon>
        <taxon>Bacillaceae</taxon>
        <taxon>Bacillus</taxon>
    </lineage>
</organism>